<gene>
    <name evidence="1" type="primary">pyrE</name>
    <name type="ordered locus">Rpal_5205</name>
</gene>
<evidence type="ECO:0000255" key="1">
    <source>
        <dbReference type="HAMAP-Rule" id="MF_01208"/>
    </source>
</evidence>
<reference key="1">
    <citation type="submission" date="2008-05" db="EMBL/GenBank/DDBJ databases">
        <title>Complete sequence of Rhodopseudomonas palustris TIE-1.</title>
        <authorList>
            <consortium name="US DOE Joint Genome Institute"/>
            <person name="Lucas S."/>
            <person name="Copeland A."/>
            <person name="Lapidus A."/>
            <person name="Glavina del Rio T."/>
            <person name="Dalin E."/>
            <person name="Tice H."/>
            <person name="Pitluck S."/>
            <person name="Chain P."/>
            <person name="Malfatti S."/>
            <person name="Shin M."/>
            <person name="Vergez L."/>
            <person name="Lang D."/>
            <person name="Schmutz J."/>
            <person name="Larimer F."/>
            <person name="Land M."/>
            <person name="Hauser L."/>
            <person name="Kyrpides N."/>
            <person name="Mikhailova N."/>
            <person name="Emerson D."/>
            <person name="Newman D.K."/>
            <person name="Roden E."/>
            <person name="Richardson P."/>
        </authorList>
    </citation>
    <scope>NUCLEOTIDE SEQUENCE [LARGE SCALE GENOMIC DNA]</scope>
    <source>
        <strain>TIE-1</strain>
    </source>
</reference>
<organism>
    <name type="scientific">Rhodopseudomonas palustris (strain TIE-1)</name>
    <dbReference type="NCBI Taxonomy" id="395960"/>
    <lineage>
        <taxon>Bacteria</taxon>
        <taxon>Pseudomonadati</taxon>
        <taxon>Pseudomonadota</taxon>
        <taxon>Alphaproteobacteria</taxon>
        <taxon>Hyphomicrobiales</taxon>
        <taxon>Nitrobacteraceae</taxon>
        <taxon>Rhodopseudomonas</taxon>
    </lineage>
</organism>
<proteinExistence type="inferred from homology"/>
<keyword id="KW-0328">Glycosyltransferase</keyword>
<keyword id="KW-0460">Magnesium</keyword>
<keyword id="KW-0665">Pyrimidine biosynthesis</keyword>
<keyword id="KW-0808">Transferase</keyword>
<dbReference type="EC" id="2.4.2.10" evidence="1"/>
<dbReference type="EMBL" id="CP001096">
    <property type="protein sequence ID" value="ACF03693.1"/>
    <property type="molecule type" value="Genomic_DNA"/>
</dbReference>
<dbReference type="RefSeq" id="WP_012497843.1">
    <property type="nucleotide sequence ID" value="NC_011004.1"/>
</dbReference>
<dbReference type="SMR" id="B3QC92"/>
<dbReference type="KEGG" id="rpt:Rpal_5205"/>
<dbReference type="HOGENOM" id="CLU_074878_2_1_5"/>
<dbReference type="OrthoDB" id="9779060at2"/>
<dbReference type="UniPathway" id="UPA00070">
    <property type="reaction ID" value="UER00119"/>
</dbReference>
<dbReference type="Proteomes" id="UP000001725">
    <property type="component" value="Chromosome"/>
</dbReference>
<dbReference type="GO" id="GO:0000287">
    <property type="term" value="F:magnesium ion binding"/>
    <property type="evidence" value="ECO:0007669"/>
    <property type="project" value="UniProtKB-UniRule"/>
</dbReference>
<dbReference type="GO" id="GO:0004588">
    <property type="term" value="F:orotate phosphoribosyltransferase activity"/>
    <property type="evidence" value="ECO:0007669"/>
    <property type="project" value="UniProtKB-UniRule"/>
</dbReference>
<dbReference type="GO" id="GO:0044205">
    <property type="term" value="P:'de novo' UMP biosynthetic process"/>
    <property type="evidence" value="ECO:0007669"/>
    <property type="project" value="UniProtKB-UniRule"/>
</dbReference>
<dbReference type="GO" id="GO:0019856">
    <property type="term" value="P:pyrimidine nucleobase biosynthetic process"/>
    <property type="evidence" value="ECO:0007669"/>
    <property type="project" value="TreeGrafter"/>
</dbReference>
<dbReference type="CDD" id="cd06223">
    <property type="entry name" value="PRTases_typeI"/>
    <property type="match status" value="1"/>
</dbReference>
<dbReference type="FunFam" id="3.40.50.2020:FF:000029">
    <property type="entry name" value="Orotate phosphoribosyltransferase"/>
    <property type="match status" value="1"/>
</dbReference>
<dbReference type="Gene3D" id="3.40.50.2020">
    <property type="match status" value="1"/>
</dbReference>
<dbReference type="HAMAP" id="MF_01208">
    <property type="entry name" value="PyrE"/>
    <property type="match status" value="1"/>
</dbReference>
<dbReference type="InterPro" id="IPR023031">
    <property type="entry name" value="OPRT"/>
</dbReference>
<dbReference type="InterPro" id="IPR004467">
    <property type="entry name" value="Or_phspho_trans_dom"/>
</dbReference>
<dbReference type="InterPro" id="IPR000836">
    <property type="entry name" value="PRibTrfase_dom"/>
</dbReference>
<dbReference type="InterPro" id="IPR029057">
    <property type="entry name" value="PRTase-like"/>
</dbReference>
<dbReference type="NCBIfam" id="TIGR00336">
    <property type="entry name" value="pyrE"/>
    <property type="match status" value="1"/>
</dbReference>
<dbReference type="PANTHER" id="PTHR19278">
    <property type="entry name" value="OROTATE PHOSPHORIBOSYLTRANSFERASE"/>
    <property type="match status" value="1"/>
</dbReference>
<dbReference type="PANTHER" id="PTHR19278:SF9">
    <property type="entry name" value="URIDINE 5'-MONOPHOSPHATE SYNTHASE"/>
    <property type="match status" value="1"/>
</dbReference>
<dbReference type="Pfam" id="PF00156">
    <property type="entry name" value="Pribosyltran"/>
    <property type="match status" value="1"/>
</dbReference>
<dbReference type="SUPFAM" id="SSF53271">
    <property type="entry name" value="PRTase-like"/>
    <property type="match status" value="1"/>
</dbReference>
<sequence length="187" mass="20064">MSKSASRARLADIIRTRSFGRGEITLASGRKSDFYFNLKPTMLDPEGAALLAELTYETLRDEKVDYVGGLEMGAVPLAGAIAQLSWLKNHPISAFFVRKKPKEHGARLSVEGLAKGESLAGKRCVIVEDVTTTGGSAIKAVEAVKESGAEIVLVLTMVDREEGATEAFAAAGLPFRSLYKASEFLNV</sequence>
<protein>
    <recommendedName>
        <fullName evidence="1">Orotate phosphoribosyltransferase</fullName>
        <shortName evidence="1">OPRT</shortName>
        <shortName evidence="1">OPRTase</shortName>
        <ecNumber evidence="1">2.4.2.10</ecNumber>
    </recommendedName>
</protein>
<accession>B3QC92</accession>
<comment type="function">
    <text evidence="1">Catalyzes the transfer of a ribosyl phosphate group from 5-phosphoribose 1-diphosphate to orotate, leading to the formation of orotidine monophosphate (OMP).</text>
</comment>
<comment type="catalytic activity">
    <reaction evidence="1">
        <text>orotidine 5'-phosphate + diphosphate = orotate + 5-phospho-alpha-D-ribose 1-diphosphate</text>
        <dbReference type="Rhea" id="RHEA:10380"/>
        <dbReference type="ChEBI" id="CHEBI:30839"/>
        <dbReference type="ChEBI" id="CHEBI:33019"/>
        <dbReference type="ChEBI" id="CHEBI:57538"/>
        <dbReference type="ChEBI" id="CHEBI:58017"/>
        <dbReference type="EC" id="2.4.2.10"/>
    </reaction>
</comment>
<comment type="cofactor">
    <cofactor evidence="1">
        <name>Mg(2+)</name>
        <dbReference type="ChEBI" id="CHEBI:18420"/>
    </cofactor>
</comment>
<comment type="pathway">
    <text evidence="1">Pyrimidine metabolism; UMP biosynthesis via de novo pathway; UMP from orotate: step 1/2.</text>
</comment>
<comment type="subunit">
    <text evidence="1">Homodimer.</text>
</comment>
<comment type="similarity">
    <text evidence="1">Belongs to the purine/pyrimidine phosphoribosyltransferase family. PyrE subfamily.</text>
</comment>
<name>PYRE_RHOPT</name>
<feature type="chain" id="PRO_1000138823" description="Orotate phosphoribosyltransferase">
    <location>
        <begin position="1"/>
        <end position="187"/>
    </location>
</feature>
<feature type="binding site" evidence="1">
    <location>
        <position position="98"/>
    </location>
    <ligand>
        <name>5-phospho-alpha-D-ribose 1-diphosphate</name>
        <dbReference type="ChEBI" id="CHEBI:58017"/>
        <note>ligand shared between dimeric partners</note>
    </ligand>
</feature>
<feature type="binding site" description="in other chain" evidence="1">
    <location>
        <position position="99"/>
    </location>
    <ligand>
        <name>5-phospho-alpha-D-ribose 1-diphosphate</name>
        <dbReference type="ChEBI" id="CHEBI:58017"/>
        <note>ligand shared between dimeric partners</note>
    </ligand>
</feature>
<feature type="binding site" evidence="1">
    <location>
        <position position="102"/>
    </location>
    <ligand>
        <name>5-phospho-alpha-D-ribose 1-diphosphate</name>
        <dbReference type="ChEBI" id="CHEBI:58017"/>
        <note>ligand shared between dimeric partners</note>
    </ligand>
</feature>
<feature type="binding site" evidence="1">
    <location>
        <position position="104"/>
    </location>
    <ligand>
        <name>5-phospho-alpha-D-ribose 1-diphosphate</name>
        <dbReference type="ChEBI" id="CHEBI:58017"/>
        <note>ligand shared between dimeric partners</note>
    </ligand>
</feature>
<feature type="binding site" description="in other chain" evidence="1">
    <location>
        <begin position="128"/>
        <end position="136"/>
    </location>
    <ligand>
        <name>5-phospho-alpha-D-ribose 1-diphosphate</name>
        <dbReference type="ChEBI" id="CHEBI:58017"/>
        <note>ligand shared between dimeric partners</note>
    </ligand>
</feature>
<feature type="binding site" evidence="1">
    <location>
        <position position="132"/>
    </location>
    <ligand>
        <name>orotate</name>
        <dbReference type="ChEBI" id="CHEBI:30839"/>
    </ligand>
</feature>
<feature type="binding site" evidence="1">
    <location>
        <position position="160"/>
    </location>
    <ligand>
        <name>orotate</name>
        <dbReference type="ChEBI" id="CHEBI:30839"/>
    </ligand>
</feature>